<dbReference type="EMBL" id="U17073">
    <property type="protein sequence ID" value="AAA57121.1"/>
    <property type="molecule type" value="mRNA"/>
</dbReference>
<dbReference type="EMBL" id="BX908789">
    <property type="protein sequence ID" value="CAF05882.1"/>
    <property type="molecule type" value="Genomic_DNA"/>
</dbReference>
<dbReference type="EMBL" id="CM002242">
    <property type="protein sequence ID" value="ESA42013.1"/>
    <property type="molecule type" value="Genomic_DNA"/>
</dbReference>
<dbReference type="EMBL" id="CM002242">
    <property type="protein sequence ID" value="ESA42014.1"/>
    <property type="molecule type" value="Genomic_DNA"/>
</dbReference>
<dbReference type="EMBL" id="CM002242">
    <property type="protein sequence ID" value="ESA42015.1"/>
    <property type="molecule type" value="Genomic_DNA"/>
</dbReference>
<dbReference type="PIR" id="T46659">
    <property type="entry name" value="T46659"/>
</dbReference>
<dbReference type="RefSeq" id="XP_011395124.1">
    <molecule id="P19970-2"/>
    <property type="nucleotide sequence ID" value="XM_011396822.1"/>
</dbReference>
<dbReference type="RefSeq" id="XP_011395125.1">
    <molecule id="P19970-1"/>
    <property type="nucleotide sequence ID" value="XM_011396823.1"/>
</dbReference>
<dbReference type="RefSeq" id="XP_011395126.1">
    <molecule id="P19970-1"/>
    <property type="nucleotide sequence ID" value="XM_011396824.1"/>
</dbReference>
<dbReference type="SMR" id="P19970"/>
<dbReference type="DIP" id="DIP-41987N"/>
<dbReference type="IntAct" id="P19970">
    <property type="interactions" value="2"/>
</dbReference>
<dbReference type="MINT" id="P19970"/>
<dbReference type="STRING" id="367110.P19970"/>
<dbReference type="iPTMnet" id="P19970"/>
<dbReference type="PaxDb" id="5141-EFNCRP00000003120"/>
<dbReference type="EnsemblFungi" id="ESA42013">
    <molecule id="P19970-1"/>
    <property type="protein sequence ID" value="ESA42013"/>
    <property type="gene ID" value="NCU02265"/>
</dbReference>
<dbReference type="EnsemblFungi" id="ESA42014">
    <molecule id="P19970-1"/>
    <property type="protein sequence ID" value="ESA42014"/>
    <property type="gene ID" value="NCU02265"/>
</dbReference>
<dbReference type="EnsemblFungi" id="ESA42015">
    <molecule id="P19970-2"/>
    <property type="protein sequence ID" value="ESA42015"/>
    <property type="gene ID" value="NCU02265"/>
</dbReference>
<dbReference type="GeneID" id="3876095"/>
<dbReference type="KEGG" id="ncr:NCU02265"/>
<dbReference type="VEuPathDB" id="FungiDB:NCU02265"/>
<dbReference type="HOGENOM" id="CLU_007103_1_0_1"/>
<dbReference type="InParanoid" id="P19970"/>
<dbReference type="OMA" id="QTHENEH"/>
<dbReference type="OrthoDB" id="2536795at2759"/>
<dbReference type="Proteomes" id="UP000001805">
    <property type="component" value="Chromosome 7, Linkage Group VII"/>
</dbReference>
<dbReference type="GO" id="GO:0005737">
    <property type="term" value="C:cytoplasm"/>
    <property type="evidence" value="ECO:0007669"/>
    <property type="project" value="InterPro"/>
</dbReference>
<dbReference type="GO" id="GO:0005634">
    <property type="term" value="C:nucleus"/>
    <property type="evidence" value="ECO:0007669"/>
    <property type="project" value="UniProtKB-SubCell"/>
</dbReference>
<dbReference type="GO" id="GO:0007623">
    <property type="term" value="P:circadian rhythm"/>
    <property type="evidence" value="ECO:0007669"/>
    <property type="project" value="InterPro"/>
</dbReference>
<dbReference type="GO" id="GO:0006355">
    <property type="term" value="P:regulation of DNA-templated transcription"/>
    <property type="evidence" value="ECO:0007669"/>
    <property type="project" value="InterPro"/>
</dbReference>
<dbReference type="InterPro" id="IPR018554">
    <property type="entry name" value="FRQ"/>
</dbReference>
<dbReference type="Pfam" id="PF09421">
    <property type="entry name" value="FRQ"/>
    <property type="match status" value="1"/>
</dbReference>
<name>FRQ_NEUCR</name>
<accession>P19970</accession>
<accession>Q01276</accession>
<accession>Q7RVB1</accession>
<accession>V5IKG2</accession>
<accession>V5IL36</accession>
<evidence type="ECO:0000255" key="1"/>
<evidence type="ECO:0000256" key="2">
    <source>
        <dbReference type="SAM" id="MobiDB-lite"/>
    </source>
</evidence>
<evidence type="ECO:0000269" key="3">
    <source>
    </source>
</evidence>
<evidence type="ECO:0000269" key="4">
    <source>
    </source>
</evidence>
<evidence type="ECO:0000269" key="5">
    <source>
    </source>
</evidence>
<evidence type="ECO:0000305" key="6"/>
<protein>
    <recommendedName>
        <fullName>Frequency clock protein</fullName>
    </recommendedName>
</protein>
<sequence length="989" mass="108200">MADSGDKSQGMRPPPFDSRGHPLPRRASPDKSITLENHRLARDTSSRVTSSSALGVTESQPQLKSSPTRRNSSGESEPTNWFNQSNRNPAAAFHDESHIMEVDPPFYQKETDSSNEESRYPPGRNPVHPPGGVQLPGFRPVAAHSSAADDYRSVIDDLTVENKRLKEELKRYKQFGSDVMRKEKLFEIKVHGLPRRKKRELEATLRDFAASLGDSSESTSQRRKTGRHGTAVHSSGVSLSKHDSSSSSRSRPVDSAYNSMSTGRSSHAPHSSGPSLGRPSLTRAKSVGTQKVENYLRDTPDGLLPHHIVMTDKEKKKLVVRRLEQLFTGKISGRNMQRNQSMPSMDAPLAPEGTNMAPPRPPPEGLREACIQLQDGDNPRKNRSSKDNGSASNSGGDQTELGGTGTGSGDGSGSGGRTGNNTSPPGAIAPDQRPTRPRDLDPDRVQIPSENMDYIRHLGLVSPEFLQGSRTSYQDVAPDAEGWVYLNLLCNLAQLHMVNVTPSFIRQAVSEKSTKFQLSADGRKIRWRGGTDGTKFSSDSSEDKSQQSPMTEDTEDGSDKNGRRKKRKTQQASSEIGRFGPSRSPSDTFHYKPMFVHRNSSSIETSLEESMSQGSEDAVDESNMGNSKWDFSGSGTTQQRRKRRYDGAIVYYTGAPFCTDLSGDPGDMSPTAQMTAGREVEGSGSGDEVEHVLQRTLSGSSLPIRPLSDDRARVAEVLDFDPGNPPELVADDGSSPNDEDFVFPWCEDPAKVRIQPIAKEVMEPSGLGGVLPDDHFVMLVTTRRVVRPILQRQLSRSTTSEDTAEFIAERLAAIRTSSPLPPRSHRLTVAPLQVEYVSGQFRRLNPAPLPPPAIFYPPFSTDSSWDDGDDLASDDEEVEEVEEDSYSEGQISRRANPHFSDNNTYMRKDDLAFDTETDVRMDSDDNRLSDSGHNMRAMMPRAEAVDGDDSPLAAVTGKEVDMLHTGSSVATAGGAESGYSSSMEDVSSS</sequence>
<organism>
    <name type="scientific">Neurospora crassa (strain ATCC 24698 / 74-OR23-1A / CBS 708.71 / DSM 1257 / FGSC 987)</name>
    <dbReference type="NCBI Taxonomy" id="367110"/>
    <lineage>
        <taxon>Eukaryota</taxon>
        <taxon>Fungi</taxon>
        <taxon>Dikarya</taxon>
        <taxon>Ascomycota</taxon>
        <taxon>Pezizomycotina</taxon>
        <taxon>Sordariomycetes</taxon>
        <taxon>Sordariomycetidae</taxon>
        <taxon>Sordariales</taxon>
        <taxon>Sordariaceae</taxon>
        <taxon>Neurospora</taxon>
    </lineage>
</organism>
<gene>
    <name type="primary">frq</name>
    <name type="ORF">B13D24.170</name>
    <name type="ORF">NCU02265</name>
</gene>
<comment type="function">
    <text>Circadian clock component involved in the generation of biological rhythms, in particular in rhythm stability, period length, and temperature compensation. Oscillates in abundance with a daily peak early in the morning. Behaves as a negative element in circadian transcriptional loop. May bind to wc-2 protein. The complex frq-wc-2 may turn off the expression of frq.</text>
</comment>
<comment type="interaction">
    <interactant intactId="EBI-6995022">
        <id>P19970</id>
    </interactant>
    <interactant intactId="EBI-15874858">
        <id>Q873J5</id>
        <label>B9B11.040</label>
    </interactant>
    <organismsDiffer>true</organismsDiffer>
    <experiments>2</experiments>
</comment>
<comment type="subcellular location">
    <subcellularLocation>
        <location evidence="6">Nucleus</location>
    </subcellularLocation>
</comment>
<comment type="alternative products">
    <event type="alternative initiation"/>
    <isoform>
        <id>P19970-1</id>
        <name>Long</name>
        <sequence type="displayed"/>
    </isoform>
    <isoform>
        <id>P19970-2</id>
        <name>Short</name>
        <sequence type="described" ref="VSP_018781"/>
    </isoform>
</comment>
<comment type="induction">
    <text>By light; perhaps through white collar-1 (wc-1) and white collar-2 (wc-2). Also activated directly by wc-1 and wc-2.</text>
</comment>
<comment type="PTM">
    <text evidence="3 4">Progressive phosphorylation during the late circadian day and early night. Phosphorylation is also involved in regulating frq degradation. Phosphorylation by CKII may have at least three functions; it decreases the stability of frq, reduces the protein complex formation between frq and the white collar proteins, and is important for the closing of the Neurospora circadian negative feedback loop.</text>
</comment>
<comment type="miscellaneous">
    <molecule>Isoform Long</molecule>
    <text>Maintains rhythms at high temperature (30 degrees Celsius).</text>
</comment>
<comment type="miscellaneous">
    <molecule>Isoform Short</molecule>
    <text evidence="6">Maintains rhythms at lower temperature (18 degrees Celsius).</text>
</comment>
<comment type="similarity">
    <text evidence="6">Belongs to the FRQ family.</text>
</comment>
<comment type="sequence caution" evidence="6">
    <conflict type="erroneous gene model prediction" ref="4"/>
</comment>
<proteinExistence type="evidence at protein level"/>
<keyword id="KW-0024">Alternative initiation</keyword>
<keyword id="KW-0090">Biological rhythms</keyword>
<keyword id="KW-0539">Nucleus</keyword>
<keyword id="KW-0597">Phosphoprotein</keyword>
<keyword id="KW-1185">Reference proteome</keyword>
<keyword id="KW-0804">Transcription</keyword>
<keyword id="KW-0805">Transcription regulation</keyword>
<feature type="chain" id="PRO_0000021288" description="Frequency clock protein">
    <location>
        <begin position="1"/>
        <end position="989"/>
    </location>
</feature>
<feature type="region of interest" description="Disordered" evidence="2">
    <location>
        <begin position="1"/>
        <end position="139"/>
    </location>
</feature>
<feature type="region of interest" description="Disordered" evidence="2">
    <location>
        <begin position="208"/>
        <end position="290"/>
    </location>
</feature>
<feature type="region of interest" description="Disordered" evidence="2">
    <location>
        <begin position="331"/>
        <end position="445"/>
    </location>
</feature>
<feature type="region of interest" description="Disordered" evidence="2">
    <location>
        <begin position="524"/>
        <end position="642"/>
    </location>
</feature>
<feature type="region of interest" description="Disordered" evidence="2">
    <location>
        <begin position="865"/>
        <end position="907"/>
    </location>
</feature>
<feature type="region of interest" description="Disordered" evidence="2">
    <location>
        <begin position="968"/>
        <end position="989"/>
    </location>
</feature>
<feature type="short sequence motif" description="Nuclear localization signal" evidence="1">
    <location>
        <begin position="564"/>
        <end position="568"/>
    </location>
</feature>
<feature type="compositionally biased region" description="Basic and acidic residues" evidence="2">
    <location>
        <begin position="36"/>
        <end position="45"/>
    </location>
</feature>
<feature type="compositionally biased region" description="Polar residues" evidence="2">
    <location>
        <begin position="46"/>
        <end position="88"/>
    </location>
</feature>
<feature type="compositionally biased region" description="Basic and acidic residues" evidence="2">
    <location>
        <begin position="109"/>
        <end position="119"/>
    </location>
</feature>
<feature type="compositionally biased region" description="Low complexity" evidence="2">
    <location>
        <begin position="233"/>
        <end position="255"/>
    </location>
</feature>
<feature type="compositionally biased region" description="Polar residues" evidence="2">
    <location>
        <begin position="256"/>
        <end position="274"/>
    </location>
</feature>
<feature type="compositionally biased region" description="Polar residues" evidence="2">
    <location>
        <begin position="334"/>
        <end position="343"/>
    </location>
</feature>
<feature type="compositionally biased region" description="Basic and acidic residues" evidence="2">
    <location>
        <begin position="377"/>
        <end position="386"/>
    </location>
</feature>
<feature type="compositionally biased region" description="Polar residues" evidence="2">
    <location>
        <begin position="387"/>
        <end position="397"/>
    </location>
</feature>
<feature type="compositionally biased region" description="Gly residues" evidence="2">
    <location>
        <begin position="402"/>
        <end position="418"/>
    </location>
</feature>
<feature type="compositionally biased region" description="Basic and acidic residues" evidence="2">
    <location>
        <begin position="433"/>
        <end position="444"/>
    </location>
</feature>
<feature type="compositionally biased region" description="Polar residues" evidence="2">
    <location>
        <begin position="598"/>
        <end position="615"/>
    </location>
</feature>
<feature type="compositionally biased region" description="Acidic residues" evidence="2">
    <location>
        <begin position="865"/>
        <end position="886"/>
    </location>
</feature>
<feature type="compositionally biased region" description="Polar residues" evidence="2">
    <location>
        <begin position="978"/>
        <end position="989"/>
    </location>
</feature>
<feature type="modified residue" description="Phosphothreonine" evidence="3">
    <location>
        <position position="501"/>
    </location>
</feature>
<feature type="modified residue" description="Phosphoserine" evidence="3">
    <location>
        <position position="513"/>
    </location>
</feature>
<feature type="modified residue" description="Phosphoserine" evidence="3">
    <location>
        <position position="519"/>
    </location>
</feature>
<feature type="splice variant" id="VSP_018781" description="In isoform Short." evidence="6">
    <location>
        <begin position="1"/>
        <end position="99"/>
    </location>
</feature>
<feature type="mutagenesis site" description="In FRQ3; lengthened period." evidence="5">
    <original>E</original>
    <variation>K</variation>
    <location>
        <position position="364"/>
    </location>
</feature>
<feature type="mutagenesis site" description="In FRQ7; lengthened period." evidence="5">
    <original>G</original>
    <variation>D</variation>
    <location>
        <position position="459"/>
    </location>
</feature>
<feature type="mutagenesis site" description="In FRQ1; shortened period." evidence="5">
    <original>G</original>
    <variation>S</variation>
    <location>
        <position position="482"/>
    </location>
</feature>
<feature type="mutagenesis site" description="In FRQ10; no effect." evidence="3">
    <original>TPS</original>
    <variation>APG</variation>
    <location>
        <begin position="501"/>
        <end position="503"/>
    </location>
</feature>
<feature type="mutagenesis site" description="In FRQ10; strong reduction in the degradation rate; lengthened period." evidence="3">
    <original>ST</original>
    <variation>RA</variation>
    <location>
        <begin position="513"/>
        <end position="514"/>
    </location>
</feature>
<feature type="mutagenesis site" description="In FRQ10; reduces phosphorylation; slight reduction in the degradation rate; loss of rhythmicity.">
    <original>S</original>
    <variation>D</variation>
    <location>
        <position position="513"/>
    </location>
</feature>
<feature type="mutagenesis site" description="In FRQ10; reduces phosphorylation; strong reduction in the degradation rate; lengthened period.">
    <original>S</original>
    <variation>I</variation>
    <location>
        <position position="513"/>
    </location>
</feature>
<feature type="mutagenesis site" description="In FRQ10; no effect." evidence="3">
    <original>S</original>
    <variation>A</variation>
    <location>
        <position position="519"/>
    </location>
</feature>
<feature type="mutagenesis site" description="In FRQ9; loss of rhythmicity.">
    <location>
        <begin position="663"/>
        <end position="989"/>
    </location>
</feature>
<feature type="mutagenesis site" description="In FRQ2; shortened period." evidence="5">
    <original>A</original>
    <variation>T</variation>
    <location>
        <position position="895"/>
    </location>
</feature>
<feature type="sequence conflict" description="In Ref. 1; AAA57121." evidence="6" ref="1">
    <original>S</original>
    <variation>T</variation>
    <location>
        <position position="146"/>
    </location>
</feature>
<feature type="sequence conflict" description="In Ref. 4." evidence="6" ref="4">
    <original>EATLRD</original>
    <variation>MGGNRP</variation>
    <location>
        <begin position="202"/>
        <end position="207"/>
    </location>
</feature>
<feature type="sequence conflict" description="In Ref. 1; AAA57121." evidence="6" ref="1">
    <original>D</original>
    <variation>H</variation>
    <location>
        <position position="207"/>
    </location>
</feature>
<feature type="sequence conflict" description="In Ref. 1; AAA57121." evidence="6" ref="1">
    <original>H</original>
    <variation>Y</variation>
    <location>
        <position position="233"/>
    </location>
</feature>
<feature type="sequence conflict" description="In Ref. 1; AAA57121 and 4." evidence="6" ref="1 4">
    <original>ML</original>
    <variation>IV</variation>
    <location>
        <begin position="962"/>
        <end position="963"/>
    </location>
</feature>
<reference key="1">
    <citation type="journal article" date="1994" name="Proc. Natl. Acad. Sci. U.S.A.">
        <title>Circadian clock locus frequency: protein encoded by a single open reading frame defines period length and temperature compensation.</title>
        <authorList>
            <person name="Aronson B.D."/>
            <person name="Johnson K.A."/>
            <person name="Dunlap J.C."/>
        </authorList>
    </citation>
    <scope>NUCLEOTIDE SEQUENCE [MRNA]</scope>
    <scope>MUTAGENESIS OF GLU-364; GLY-459; GLY-482 AND ALA-895</scope>
    <source>
        <strain>ATCC 24698 / 74-OR23-1A / CBS 708.71 / DSM 1257 / FGSC 987</strain>
    </source>
</reference>
<reference key="2">
    <citation type="journal article" date="2003" name="Nucleic Acids Res.">
        <title>What's in the genome of a filamentous fungus? Analysis of the Neurospora genome sequence.</title>
        <authorList>
            <person name="Mannhaupt G."/>
            <person name="Montrone C."/>
            <person name="Haase D."/>
            <person name="Mewes H.-W."/>
            <person name="Aign V."/>
            <person name="Hoheisel J.D."/>
            <person name="Fartmann B."/>
            <person name="Nyakatura G."/>
            <person name="Kempken F."/>
            <person name="Maier J."/>
            <person name="Schulte U."/>
        </authorList>
    </citation>
    <scope>NUCLEOTIDE SEQUENCE [LARGE SCALE GENOMIC DNA]</scope>
    <source>
        <strain>ATCC 24698 / 74-OR23-1A / CBS 708.71 / DSM 1257 / FGSC 987</strain>
    </source>
</reference>
<reference key="3">
    <citation type="journal article" date="2003" name="Nature">
        <title>The genome sequence of the filamentous fungus Neurospora crassa.</title>
        <authorList>
            <person name="Galagan J.E."/>
            <person name="Calvo S.E."/>
            <person name="Borkovich K.A."/>
            <person name="Selker E.U."/>
            <person name="Read N.D."/>
            <person name="Jaffe D.B."/>
            <person name="FitzHugh W."/>
            <person name="Ma L.-J."/>
            <person name="Smirnov S."/>
            <person name="Purcell S."/>
            <person name="Rehman B."/>
            <person name="Elkins T."/>
            <person name="Engels R."/>
            <person name="Wang S."/>
            <person name="Nielsen C.B."/>
            <person name="Butler J."/>
            <person name="Endrizzi M."/>
            <person name="Qui D."/>
            <person name="Ianakiev P."/>
            <person name="Bell-Pedersen D."/>
            <person name="Nelson M.A."/>
            <person name="Werner-Washburne M."/>
            <person name="Selitrennikoff C.P."/>
            <person name="Kinsey J.A."/>
            <person name="Braun E.L."/>
            <person name="Zelter A."/>
            <person name="Schulte U."/>
            <person name="Kothe G.O."/>
            <person name="Jedd G."/>
            <person name="Mewes H.-W."/>
            <person name="Staben C."/>
            <person name="Marcotte E."/>
            <person name="Greenberg D."/>
            <person name="Roy A."/>
            <person name="Foley K."/>
            <person name="Naylor J."/>
            <person name="Stange-Thomann N."/>
            <person name="Barrett R."/>
            <person name="Gnerre S."/>
            <person name="Kamal M."/>
            <person name="Kamvysselis M."/>
            <person name="Mauceli E.W."/>
            <person name="Bielke C."/>
            <person name="Rudd S."/>
            <person name="Frishman D."/>
            <person name="Krystofova S."/>
            <person name="Rasmussen C."/>
            <person name="Metzenberg R.L."/>
            <person name="Perkins D.D."/>
            <person name="Kroken S."/>
            <person name="Cogoni C."/>
            <person name="Macino G."/>
            <person name="Catcheside D.E.A."/>
            <person name="Li W."/>
            <person name="Pratt R.J."/>
            <person name="Osmani S.A."/>
            <person name="DeSouza C.P.C."/>
            <person name="Glass N.L."/>
            <person name="Orbach M.J."/>
            <person name="Berglund J.A."/>
            <person name="Voelker R."/>
            <person name="Yarden O."/>
            <person name="Plamann M."/>
            <person name="Seiler S."/>
            <person name="Dunlap J.C."/>
            <person name="Radford A."/>
            <person name="Aramayo R."/>
            <person name="Natvig D.O."/>
            <person name="Alex L.A."/>
            <person name="Mannhaupt G."/>
            <person name="Ebbole D.J."/>
            <person name="Freitag M."/>
            <person name="Paulsen I."/>
            <person name="Sachs M.S."/>
            <person name="Lander E.S."/>
            <person name="Nusbaum C."/>
            <person name="Birren B.W."/>
        </authorList>
    </citation>
    <scope>NUCLEOTIDE SEQUENCE [LARGE SCALE GENOMIC DNA]</scope>
    <source>
        <strain>ATCC 24698 / 74-OR23-1A / CBS 708.71 / DSM 1257 / FGSC 987</strain>
    </source>
</reference>
<reference key="4">
    <citation type="journal article" date="1989" name="Nature">
        <title>The Neurospora clock gene frequency shares a sequence element with the Drosophila clock gene period.</title>
        <authorList>
            <person name="McClung C.R."/>
            <person name="Fox B.A."/>
            <person name="Dunlap J.C."/>
        </authorList>
    </citation>
    <scope>NUCLEOTIDE SEQUENCE [GENOMIC DNA] OF 202-989</scope>
</reference>
<reference key="5">
    <citation type="journal article" date="2000" name="Proc. Natl. Acad. Sci. U.S.A.">
        <title>Phosphorylation of the Neurospora clock protein frequency determines its degradation rate and strongly influences the period length of the circadian clock.</title>
        <authorList>
            <person name="Liu Y."/>
            <person name="Loros J."/>
            <person name="Dunlap J.C."/>
        </authorList>
    </citation>
    <scope>PHOSPHORYLATION AT THR-501; SER-513 AND SER-519</scope>
    <scope>MUTAGENESIS OF 501-THR--SER-503; 513-SER-THR-514 AND SER-519</scope>
</reference>
<reference key="6">
    <citation type="journal article" date="2002" name="Genes Dev.">
        <title>Regulation of the Neurospora circadian clock by casein kinase II.</title>
        <authorList>
            <person name="Yang Y."/>
            <person name="Cheng P."/>
            <person name="Liu Y."/>
        </authorList>
    </citation>
    <scope>PHOSPHORYLATION BY CK2</scope>
</reference>